<gene>
    <name type="ordered locus">BRADO1188</name>
</gene>
<reference key="1">
    <citation type="journal article" date="2007" name="Science">
        <title>Legumes symbioses: absence of nod genes in photosynthetic bradyrhizobia.</title>
        <authorList>
            <person name="Giraud E."/>
            <person name="Moulin L."/>
            <person name="Vallenet D."/>
            <person name="Barbe V."/>
            <person name="Cytryn E."/>
            <person name="Avarre J.-C."/>
            <person name="Jaubert M."/>
            <person name="Simon D."/>
            <person name="Cartieaux F."/>
            <person name="Prin Y."/>
            <person name="Bena G."/>
            <person name="Hannibal L."/>
            <person name="Fardoux J."/>
            <person name="Kojadinovic M."/>
            <person name="Vuillet L."/>
            <person name="Lajus A."/>
            <person name="Cruveiller S."/>
            <person name="Rouy Z."/>
            <person name="Mangenot S."/>
            <person name="Segurens B."/>
            <person name="Dossat C."/>
            <person name="Franck W.L."/>
            <person name="Chang W.-S."/>
            <person name="Saunders E."/>
            <person name="Bruce D."/>
            <person name="Richardson P."/>
            <person name="Normand P."/>
            <person name="Dreyfus B."/>
            <person name="Pignol D."/>
            <person name="Stacey G."/>
            <person name="Emerich D."/>
            <person name="Vermeglio A."/>
            <person name="Medigue C."/>
            <person name="Sadowsky M."/>
        </authorList>
    </citation>
    <scope>NUCLEOTIDE SEQUENCE [LARGE SCALE GENOMIC DNA]</scope>
    <source>
        <strain>ORS 278</strain>
    </source>
</reference>
<comment type="similarity">
    <text evidence="1">Belongs to the UPF0335 family.</text>
</comment>
<dbReference type="EMBL" id="CU234118">
    <property type="protein sequence ID" value="CAL75095.1"/>
    <property type="molecule type" value="Genomic_DNA"/>
</dbReference>
<dbReference type="RefSeq" id="WP_008961835.1">
    <property type="nucleotide sequence ID" value="NC_009445.1"/>
</dbReference>
<dbReference type="SMR" id="A4YMG9"/>
<dbReference type="STRING" id="114615.BRADO1188"/>
<dbReference type="KEGG" id="bra:BRADO1188"/>
<dbReference type="eggNOG" id="COG3750">
    <property type="taxonomic scope" value="Bacteria"/>
</dbReference>
<dbReference type="HOGENOM" id="CLU_158651_2_0_5"/>
<dbReference type="OrthoDB" id="9813793at2"/>
<dbReference type="Proteomes" id="UP000001994">
    <property type="component" value="Chromosome"/>
</dbReference>
<dbReference type="GO" id="GO:0003677">
    <property type="term" value="F:DNA binding"/>
    <property type="evidence" value="ECO:0007669"/>
    <property type="project" value="InterPro"/>
</dbReference>
<dbReference type="HAMAP" id="MF_00797">
    <property type="entry name" value="UPF0335"/>
    <property type="match status" value="1"/>
</dbReference>
<dbReference type="InterPro" id="IPR018753">
    <property type="entry name" value="GapR-like"/>
</dbReference>
<dbReference type="InterPro" id="IPR046367">
    <property type="entry name" value="GapR-like_DNA-bd"/>
</dbReference>
<dbReference type="NCBIfam" id="NF010247">
    <property type="entry name" value="PRK13694.1"/>
    <property type="match status" value="1"/>
</dbReference>
<dbReference type="Pfam" id="PF10073">
    <property type="entry name" value="GapR_DNA-bd"/>
    <property type="match status" value="1"/>
</dbReference>
<proteinExistence type="inferred from homology"/>
<evidence type="ECO:0000255" key="1">
    <source>
        <dbReference type="HAMAP-Rule" id="MF_00797"/>
    </source>
</evidence>
<protein>
    <recommendedName>
        <fullName evidence="1">UPF0335 protein BRADO1188</fullName>
    </recommendedName>
</protein>
<keyword id="KW-1185">Reference proteome</keyword>
<name>Y1188_BRASO</name>
<accession>A4YMG9</accession>
<organism>
    <name type="scientific">Bradyrhizobium sp. (strain ORS 278)</name>
    <dbReference type="NCBI Taxonomy" id="114615"/>
    <lineage>
        <taxon>Bacteria</taxon>
        <taxon>Pseudomonadati</taxon>
        <taxon>Pseudomonadota</taxon>
        <taxon>Alphaproteobacteria</taxon>
        <taxon>Hyphomicrobiales</taxon>
        <taxon>Nitrobacteraceae</taxon>
        <taxon>Bradyrhizobium</taxon>
    </lineage>
</organism>
<feature type="chain" id="PRO_1000046957" description="UPF0335 protein BRADO1188">
    <location>
        <begin position="1"/>
        <end position="91"/>
    </location>
</feature>
<sequence>MATSAAAKDDDSPATRFAVDQLKSIIERIERLEEEKKAISEDIKDVYAESKGNGFDVKALRTIIRLRKQDPNERQEEESILETYMQALGMI</sequence>